<name>XYLA_SOLUE</name>
<accession>Q022S9</accession>
<dbReference type="EC" id="5.3.1.5" evidence="1"/>
<dbReference type="EMBL" id="CP000473">
    <property type="protein sequence ID" value="ABJ84021.1"/>
    <property type="molecule type" value="Genomic_DNA"/>
</dbReference>
<dbReference type="SMR" id="Q022S9"/>
<dbReference type="FunCoup" id="Q022S9">
    <property type="interactions" value="307"/>
</dbReference>
<dbReference type="STRING" id="234267.Acid_3042"/>
<dbReference type="KEGG" id="sus:Acid_3042"/>
<dbReference type="eggNOG" id="COG2115">
    <property type="taxonomic scope" value="Bacteria"/>
</dbReference>
<dbReference type="HOGENOM" id="CLU_037261_1_0_0"/>
<dbReference type="InParanoid" id="Q022S9"/>
<dbReference type="OrthoDB" id="9763981at2"/>
<dbReference type="GO" id="GO:0005737">
    <property type="term" value="C:cytoplasm"/>
    <property type="evidence" value="ECO:0007669"/>
    <property type="project" value="UniProtKB-SubCell"/>
</dbReference>
<dbReference type="GO" id="GO:0000287">
    <property type="term" value="F:magnesium ion binding"/>
    <property type="evidence" value="ECO:0007669"/>
    <property type="project" value="UniProtKB-UniRule"/>
</dbReference>
<dbReference type="GO" id="GO:0009045">
    <property type="term" value="F:xylose isomerase activity"/>
    <property type="evidence" value="ECO:0007669"/>
    <property type="project" value="UniProtKB-UniRule"/>
</dbReference>
<dbReference type="GO" id="GO:0042732">
    <property type="term" value="P:D-xylose metabolic process"/>
    <property type="evidence" value="ECO:0007669"/>
    <property type="project" value="UniProtKB-UniRule"/>
</dbReference>
<dbReference type="Gene3D" id="3.20.20.150">
    <property type="entry name" value="Divalent-metal-dependent TIM barrel enzymes"/>
    <property type="match status" value="1"/>
</dbReference>
<dbReference type="HAMAP" id="MF_00455">
    <property type="entry name" value="Xylose_isom_A"/>
    <property type="match status" value="1"/>
</dbReference>
<dbReference type="InterPro" id="IPR036237">
    <property type="entry name" value="Xyl_isomerase-like_sf"/>
</dbReference>
<dbReference type="InterPro" id="IPR013022">
    <property type="entry name" value="Xyl_isomerase-like_TIM-brl"/>
</dbReference>
<dbReference type="InterPro" id="IPR013452">
    <property type="entry name" value="Xylose_isom_bac"/>
</dbReference>
<dbReference type="InterPro" id="IPR001998">
    <property type="entry name" value="Xylose_isomerase"/>
</dbReference>
<dbReference type="NCBIfam" id="NF003998">
    <property type="entry name" value="PRK05474.1"/>
    <property type="match status" value="1"/>
</dbReference>
<dbReference type="NCBIfam" id="TIGR02630">
    <property type="entry name" value="xylose_isom_A"/>
    <property type="match status" value="1"/>
</dbReference>
<dbReference type="PANTHER" id="PTHR48408">
    <property type="match status" value="1"/>
</dbReference>
<dbReference type="PANTHER" id="PTHR48408:SF1">
    <property type="entry name" value="XYLOSE ISOMERASE"/>
    <property type="match status" value="1"/>
</dbReference>
<dbReference type="Pfam" id="PF01261">
    <property type="entry name" value="AP_endonuc_2"/>
    <property type="match status" value="1"/>
</dbReference>
<dbReference type="PRINTS" id="PR00688">
    <property type="entry name" value="XYLOSISMRASE"/>
</dbReference>
<dbReference type="SUPFAM" id="SSF51658">
    <property type="entry name" value="Xylose isomerase-like"/>
    <property type="match status" value="1"/>
</dbReference>
<dbReference type="PROSITE" id="PS51415">
    <property type="entry name" value="XYLOSE_ISOMERASE"/>
    <property type="match status" value="1"/>
</dbReference>
<reference key="1">
    <citation type="journal article" date="2009" name="Appl. Environ. Microbiol.">
        <title>Three genomes from the phylum Acidobacteria provide insight into the lifestyles of these microorganisms in soils.</title>
        <authorList>
            <person name="Ward N.L."/>
            <person name="Challacombe J.F."/>
            <person name="Janssen P.H."/>
            <person name="Henrissat B."/>
            <person name="Coutinho P.M."/>
            <person name="Wu M."/>
            <person name="Xie G."/>
            <person name="Haft D.H."/>
            <person name="Sait M."/>
            <person name="Badger J."/>
            <person name="Barabote R.D."/>
            <person name="Bradley B."/>
            <person name="Brettin T.S."/>
            <person name="Brinkac L.M."/>
            <person name="Bruce D."/>
            <person name="Creasy T."/>
            <person name="Daugherty S.C."/>
            <person name="Davidsen T.M."/>
            <person name="DeBoy R.T."/>
            <person name="Detter J.C."/>
            <person name="Dodson R.J."/>
            <person name="Durkin A.S."/>
            <person name="Ganapathy A."/>
            <person name="Gwinn-Giglio M."/>
            <person name="Han C.S."/>
            <person name="Khouri H."/>
            <person name="Kiss H."/>
            <person name="Kothari S.P."/>
            <person name="Madupu R."/>
            <person name="Nelson K.E."/>
            <person name="Nelson W.C."/>
            <person name="Paulsen I."/>
            <person name="Penn K."/>
            <person name="Ren Q."/>
            <person name="Rosovitz M.J."/>
            <person name="Selengut J.D."/>
            <person name="Shrivastava S."/>
            <person name="Sullivan S.A."/>
            <person name="Tapia R."/>
            <person name="Thompson L.S."/>
            <person name="Watkins K.L."/>
            <person name="Yang Q."/>
            <person name="Yu C."/>
            <person name="Zafar N."/>
            <person name="Zhou L."/>
            <person name="Kuske C.R."/>
        </authorList>
    </citation>
    <scope>NUCLEOTIDE SEQUENCE [LARGE SCALE GENOMIC DNA]</scope>
    <source>
        <strain>Ellin6076</strain>
    </source>
</reference>
<evidence type="ECO:0000255" key="1">
    <source>
        <dbReference type="HAMAP-Rule" id="MF_00455"/>
    </source>
</evidence>
<sequence>MTESYFASIAPIEFEGAASENPLAYRYYDKNRVVLGKRMEDHLRMAVCYWHTFCSEGADMFGPGTFHRPWHIGPMDQAHAEHKLNEAFEFFTRLGLPFFCFHDTDVMAEAHTIREHVDNLARIGDRIQEKMAATGVKLLWGTANLFSHPRYMAGAASNPDPDVFRFAATQVRHCMDLTKRLGGQNYVLWGGREGYDSLLNTDLKQEKAQLGRFLKMVIEHKHKIGFSGTILIEPKPHEPTKHQYDFDVETVYSFLVANGLEKEVKLNIEANHATLAGHSFEHEIATAVALGVFGSIDMNRGDPQNGWDTDQFPNDVREITTALYYILLGGGFTTGGNNFDAKVRRQSFEPADLFYAHVGAVDTVAQGLINAAAMIEGGQLAGIVKERYAGWQGELGRAILDGKMSLEALSDGAVAEGITPRPRSGRQEMIENLVGRYL</sequence>
<organism>
    <name type="scientific">Solibacter usitatus (strain Ellin6076)</name>
    <dbReference type="NCBI Taxonomy" id="234267"/>
    <lineage>
        <taxon>Bacteria</taxon>
        <taxon>Pseudomonadati</taxon>
        <taxon>Acidobacteriota</taxon>
        <taxon>Terriglobia</taxon>
        <taxon>Bryobacterales</taxon>
        <taxon>Solibacteraceae</taxon>
        <taxon>Candidatus Solibacter</taxon>
    </lineage>
</organism>
<feature type="chain" id="PRO_1000026457" description="Xylose isomerase">
    <location>
        <begin position="1"/>
        <end position="438"/>
    </location>
</feature>
<feature type="active site" evidence="1">
    <location>
        <position position="102"/>
    </location>
</feature>
<feature type="active site" evidence="1">
    <location>
        <position position="105"/>
    </location>
</feature>
<feature type="binding site" evidence="1">
    <location>
        <position position="233"/>
    </location>
    <ligand>
        <name>Mg(2+)</name>
        <dbReference type="ChEBI" id="CHEBI:18420"/>
        <label>1</label>
    </ligand>
</feature>
<feature type="binding site" evidence="1">
    <location>
        <position position="269"/>
    </location>
    <ligand>
        <name>Mg(2+)</name>
        <dbReference type="ChEBI" id="CHEBI:18420"/>
        <label>1</label>
    </ligand>
</feature>
<feature type="binding site" evidence="1">
    <location>
        <position position="269"/>
    </location>
    <ligand>
        <name>Mg(2+)</name>
        <dbReference type="ChEBI" id="CHEBI:18420"/>
        <label>2</label>
    </ligand>
</feature>
<feature type="binding site" evidence="1">
    <location>
        <position position="272"/>
    </location>
    <ligand>
        <name>Mg(2+)</name>
        <dbReference type="ChEBI" id="CHEBI:18420"/>
        <label>2</label>
    </ligand>
</feature>
<feature type="binding site" evidence="1">
    <location>
        <position position="297"/>
    </location>
    <ligand>
        <name>Mg(2+)</name>
        <dbReference type="ChEBI" id="CHEBI:18420"/>
        <label>1</label>
    </ligand>
</feature>
<feature type="binding site" evidence="1">
    <location>
        <position position="308"/>
    </location>
    <ligand>
        <name>Mg(2+)</name>
        <dbReference type="ChEBI" id="CHEBI:18420"/>
        <label>2</label>
    </ligand>
</feature>
<feature type="binding site" evidence="1">
    <location>
        <position position="310"/>
    </location>
    <ligand>
        <name>Mg(2+)</name>
        <dbReference type="ChEBI" id="CHEBI:18420"/>
        <label>2</label>
    </ligand>
</feature>
<feature type="binding site" evidence="1">
    <location>
        <position position="340"/>
    </location>
    <ligand>
        <name>Mg(2+)</name>
        <dbReference type="ChEBI" id="CHEBI:18420"/>
        <label>1</label>
    </ligand>
</feature>
<keyword id="KW-0119">Carbohydrate metabolism</keyword>
<keyword id="KW-0963">Cytoplasm</keyword>
<keyword id="KW-0413">Isomerase</keyword>
<keyword id="KW-0460">Magnesium</keyword>
<keyword id="KW-0479">Metal-binding</keyword>
<keyword id="KW-0859">Xylose metabolism</keyword>
<gene>
    <name evidence="1" type="primary">xylA</name>
    <name type="ordered locus">Acid_3042</name>
</gene>
<comment type="catalytic activity">
    <reaction evidence="1">
        <text>alpha-D-xylose = alpha-D-xylulofuranose</text>
        <dbReference type="Rhea" id="RHEA:22816"/>
        <dbReference type="ChEBI" id="CHEBI:28518"/>
        <dbReference type="ChEBI" id="CHEBI:188998"/>
        <dbReference type="EC" id="5.3.1.5"/>
    </reaction>
</comment>
<comment type="cofactor">
    <cofactor evidence="1">
        <name>Mg(2+)</name>
        <dbReference type="ChEBI" id="CHEBI:18420"/>
    </cofactor>
    <text evidence="1">Binds 2 magnesium ions per subunit.</text>
</comment>
<comment type="subunit">
    <text evidence="1">Homotetramer.</text>
</comment>
<comment type="subcellular location">
    <subcellularLocation>
        <location evidence="1">Cytoplasm</location>
    </subcellularLocation>
</comment>
<comment type="similarity">
    <text evidence="1">Belongs to the xylose isomerase family.</text>
</comment>
<protein>
    <recommendedName>
        <fullName evidence="1">Xylose isomerase</fullName>
        <ecNumber evidence="1">5.3.1.5</ecNumber>
    </recommendedName>
</protein>
<proteinExistence type="inferred from homology"/>